<feature type="chain" id="PRO_0000397906" description="Uncharacterized 9 kDa protein">
    <location>
        <begin position="1"/>
        <end position="71"/>
    </location>
</feature>
<accession>Q89635</accession>
<sequence length="71" mass="8797">MSLMNSTNPEFIEYYHTSWKPHKIELVDNIYHSYGYYVYTRSVIKRFNKHLIKTTYKRIFSHPENIVLHFR</sequence>
<proteinExistence type="predicted"/>
<dbReference type="EMBL" id="U20341">
    <property type="protein sequence ID" value="AAA79872.1"/>
    <property type="molecule type" value="Genomic_DNA"/>
</dbReference>
<dbReference type="EMBL" id="U59751">
    <property type="protein sequence ID" value="AAB03326.1"/>
    <property type="molecule type" value="Genomic_DNA"/>
</dbReference>
<dbReference type="RefSeq" id="NP_056847.1">
    <property type="nucleotide sequence ID" value="NC_001648.1"/>
</dbReference>
<dbReference type="KEGG" id="vg:1403417"/>
<dbReference type="Proteomes" id="UP000002244">
    <property type="component" value="Genome"/>
</dbReference>
<gene>
    <name type="ORF">ORF 2</name>
</gene>
<protein>
    <recommendedName>
        <fullName>Uncharacterized 9 kDa protein</fullName>
    </recommendedName>
</protein>
<reference key="1">
    <citation type="journal article" date="1998" name="Arch. Virol.">
        <title>Cassava vein mosaic virus (CsVMV), type species for a new genus of plant double stranded DNA viruses?</title>
        <authorList>
            <person name="de Kochko A."/>
            <person name="Verdaguer B."/>
            <person name="Taylor N."/>
            <person name="Carcamo R."/>
            <person name="Beachy R.N."/>
            <person name="Fauquet C."/>
        </authorList>
    </citation>
    <scope>NUCLEOTIDE SEQUENCE [GENOMIC DNA]</scope>
</reference>
<reference key="2">
    <citation type="submission" date="1996-06" db="EMBL/GenBank/DDBJ databases">
        <authorList>
            <person name="Kochko de A."/>
            <person name="Verdaguer B."/>
            <person name="Beachy R.N."/>
            <person name="Fauquet C."/>
        </authorList>
    </citation>
    <scope>NUCLEOTIDE SEQUENCE [GENOMIC DNA]</scope>
</reference>
<reference key="3">
    <citation type="journal article" date="1995" name="J. Gen. Virol.">
        <title>Characterization of cassava vein mosaic virus: a distinct plant pararetrovirus.</title>
        <authorList>
            <person name="Calvert L.A."/>
            <person name="Ospina M.D."/>
            <person name="Shepherd R.J."/>
        </authorList>
    </citation>
    <scope>NUCLEOTIDE SEQUENCE [GENOMIC DNA]</scope>
</reference>
<keyword id="KW-1185">Reference proteome</keyword>
<organism>
    <name type="scientific">Cassava vein mosaic virus</name>
    <name type="common">CsVMV</name>
    <dbReference type="NCBI Taxonomy" id="38062"/>
    <lineage>
        <taxon>Viruses</taxon>
        <taxon>Riboviria</taxon>
        <taxon>Pararnavirae</taxon>
        <taxon>Artverviricota</taxon>
        <taxon>Revtraviricetes</taxon>
        <taxon>Ortervirales</taxon>
        <taxon>Caulimoviridae</taxon>
        <taxon>Cavemovirus</taxon>
        <taxon>Cavemovirus venamanihotis</taxon>
    </lineage>
</organism>
<organismHost>
    <name type="scientific">Manihot esculenta</name>
    <name type="common">Cassava</name>
    <name type="synonym">Jatropha manihot</name>
    <dbReference type="NCBI Taxonomy" id="3983"/>
</organismHost>
<name>YP09_CSVMV</name>